<reference key="1">
    <citation type="submission" date="2006-05" db="EMBL/GenBank/DDBJ databases">
        <title>Complete sequence of chromosome 1 of Burkholderia cenocepacia AU 1054.</title>
        <authorList>
            <consortium name="US DOE Joint Genome Institute"/>
            <person name="Copeland A."/>
            <person name="Lucas S."/>
            <person name="Lapidus A."/>
            <person name="Barry K."/>
            <person name="Detter J.C."/>
            <person name="Glavina del Rio T."/>
            <person name="Hammon N."/>
            <person name="Israni S."/>
            <person name="Dalin E."/>
            <person name="Tice H."/>
            <person name="Pitluck S."/>
            <person name="Chain P."/>
            <person name="Malfatti S."/>
            <person name="Shin M."/>
            <person name="Vergez L."/>
            <person name="Schmutz J."/>
            <person name="Larimer F."/>
            <person name="Land M."/>
            <person name="Hauser L."/>
            <person name="Kyrpides N."/>
            <person name="Lykidis A."/>
            <person name="LiPuma J.J."/>
            <person name="Konstantinidis K."/>
            <person name="Tiedje J.M."/>
            <person name="Richardson P."/>
        </authorList>
    </citation>
    <scope>NUCLEOTIDE SEQUENCE [LARGE SCALE GENOMIC DNA]</scope>
    <source>
        <strain>AU 1054</strain>
    </source>
</reference>
<protein>
    <recommendedName>
        <fullName evidence="1">Peptide chain release factor 1</fullName>
        <shortName evidence="1">RF-1</shortName>
    </recommendedName>
</protein>
<proteinExistence type="inferred from homology"/>
<evidence type="ECO:0000255" key="1">
    <source>
        <dbReference type="HAMAP-Rule" id="MF_00093"/>
    </source>
</evidence>
<sequence length="360" mass="40530">MKTSMQRKLDQLSTRLAELNDLLSRENVTADLDQYRKLTREHAELGPVVEQYALWRQSRSDETAAQELLADPSMRDFAEDEIRSAREGMARLETELQKMLLPKDPNDDRNIFLEIRAGTGGDESALFAGDLLRMYLRFAERQRWQVEMMSESASDLGGYKEVIVRIAGQGAYSRLKFESGGHRVQRVPATETQGRIHTSACTVAVMPEADEIGEVEINPADLRIDTFRASGAGGQHINKTDSAVRVTHIPTGIVVECQDDRSQHKNKDRALKVLAARIKDKQYHEQHAKEAATRKSLIGSGDRSERIRTYNFPQGRMTDHRINLTLYRLEAIMDGDLDELIGALVTEHQAELLASLGEAD</sequence>
<comment type="function">
    <text evidence="1">Peptide chain release factor 1 directs the termination of translation in response to the peptide chain termination codons UAG and UAA.</text>
</comment>
<comment type="subcellular location">
    <subcellularLocation>
        <location evidence="1">Cytoplasm</location>
    </subcellularLocation>
</comment>
<comment type="PTM">
    <text evidence="1">Methylated by PrmC. Methylation increases the termination efficiency of RF1.</text>
</comment>
<comment type="similarity">
    <text evidence="1">Belongs to the prokaryotic/mitochondrial release factor family.</text>
</comment>
<gene>
    <name evidence="1" type="primary">prfA</name>
    <name type="ordered locus">Bcen_2595</name>
</gene>
<keyword id="KW-0963">Cytoplasm</keyword>
<keyword id="KW-0488">Methylation</keyword>
<keyword id="KW-0648">Protein biosynthesis</keyword>
<dbReference type="EMBL" id="CP000378">
    <property type="protein sequence ID" value="ABF77494.1"/>
    <property type="molecule type" value="Genomic_DNA"/>
</dbReference>
<dbReference type="SMR" id="Q1BSB1"/>
<dbReference type="HOGENOM" id="CLU_036856_0_1_4"/>
<dbReference type="GO" id="GO:0005737">
    <property type="term" value="C:cytoplasm"/>
    <property type="evidence" value="ECO:0007669"/>
    <property type="project" value="UniProtKB-SubCell"/>
</dbReference>
<dbReference type="GO" id="GO:0016149">
    <property type="term" value="F:translation release factor activity, codon specific"/>
    <property type="evidence" value="ECO:0007669"/>
    <property type="project" value="UniProtKB-UniRule"/>
</dbReference>
<dbReference type="FunFam" id="3.30.160.20:FF:000004">
    <property type="entry name" value="Peptide chain release factor 1"/>
    <property type="match status" value="1"/>
</dbReference>
<dbReference type="FunFam" id="3.30.70.1660:FF:000002">
    <property type="entry name" value="Peptide chain release factor 1"/>
    <property type="match status" value="1"/>
</dbReference>
<dbReference type="FunFam" id="3.30.70.1660:FF:000004">
    <property type="entry name" value="Peptide chain release factor 1"/>
    <property type="match status" value="1"/>
</dbReference>
<dbReference type="Gene3D" id="3.30.160.20">
    <property type="match status" value="1"/>
</dbReference>
<dbReference type="Gene3D" id="3.30.70.1660">
    <property type="match status" value="2"/>
</dbReference>
<dbReference type="Gene3D" id="6.10.140.1950">
    <property type="match status" value="1"/>
</dbReference>
<dbReference type="HAMAP" id="MF_00093">
    <property type="entry name" value="Rel_fac_1"/>
    <property type="match status" value="1"/>
</dbReference>
<dbReference type="InterPro" id="IPR005139">
    <property type="entry name" value="PCRF"/>
</dbReference>
<dbReference type="InterPro" id="IPR000352">
    <property type="entry name" value="Pep_chain_release_fac_I"/>
</dbReference>
<dbReference type="InterPro" id="IPR045853">
    <property type="entry name" value="Pep_chain_release_fac_I_sf"/>
</dbReference>
<dbReference type="InterPro" id="IPR050057">
    <property type="entry name" value="Prokaryotic/Mito_RF"/>
</dbReference>
<dbReference type="InterPro" id="IPR004373">
    <property type="entry name" value="RF-1"/>
</dbReference>
<dbReference type="NCBIfam" id="TIGR00019">
    <property type="entry name" value="prfA"/>
    <property type="match status" value="1"/>
</dbReference>
<dbReference type="NCBIfam" id="NF001859">
    <property type="entry name" value="PRK00591.1"/>
    <property type="match status" value="1"/>
</dbReference>
<dbReference type="PANTHER" id="PTHR43804">
    <property type="entry name" value="LD18447P"/>
    <property type="match status" value="1"/>
</dbReference>
<dbReference type="PANTHER" id="PTHR43804:SF7">
    <property type="entry name" value="LD18447P"/>
    <property type="match status" value="1"/>
</dbReference>
<dbReference type="Pfam" id="PF03462">
    <property type="entry name" value="PCRF"/>
    <property type="match status" value="1"/>
</dbReference>
<dbReference type="Pfam" id="PF00472">
    <property type="entry name" value="RF-1"/>
    <property type="match status" value="1"/>
</dbReference>
<dbReference type="SMART" id="SM00937">
    <property type="entry name" value="PCRF"/>
    <property type="match status" value="1"/>
</dbReference>
<dbReference type="SUPFAM" id="SSF75620">
    <property type="entry name" value="Release factor"/>
    <property type="match status" value="1"/>
</dbReference>
<dbReference type="PROSITE" id="PS00745">
    <property type="entry name" value="RF_PROK_I"/>
    <property type="match status" value="1"/>
</dbReference>
<name>RF1_BURO1</name>
<organism>
    <name type="scientific">Burkholderia orbicola (strain AU 1054)</name>
    <dbReference type="NCBI Taxonomy" id="331271"/>
    <lineage>
        <taxon>Bacteria</taxon>
        <taxon>Pseudomonadati</taxon>
        <taxon>Pseudomonadota</taxon>
        <taxon>Betaproteobacteria</taxon>
        <taxon>Burkholderiales</taxon>
        <taxon>Burkholderiaceae</taxon>
        <taxon>Burkholderia</taxon>
        <taxon>Burkholderia cepacia complex</taxon>
        <taxon>Burkholderia orbicola</taxon>
    </lineage>
</organism>
<feature type="chain" id="PRO_0000263244" description="Peptide chain release factor 1">
    <location>
        <begin position="1"/>
        <end position="360"/>
    </location>
</feature>
<feature type="modified residue" description="N5-methylglutamine" evidence="1">
    <location>
        <position position="235"/>
    </location>
</feature>
<accession>Q1BSB1</accession>